<evidence type="ECO:0000250" key="1"/>
<evidence type="ECO:0000250" key="2">
    <source>
        <dbReference type="UniProtKB" id="Q5VXI9"/>
    </source>
</evidence>
<evidence type="ECO:0000255" key="3"/>
<evidence type="ECO:0000255" key="4">
    <source>
        <dbReference type="PROSITE-ProRule" id="PRU10037"/>
    </source>
</evidence>
<evidence type="ECO:0000269" key="5">
    <source>
    </source>
</evidence>
<evidence type="ECO:0000305" key="6"/>
<evidence type="ECO:0000305" key="7">
    <source>
    </source>
</evidence>
<reference key="1">
    <citation type="journal article" date="2005" name="Science">
        <title>The transcriptional landscape of the mammalian genome.</title>
        <authorList>
            <person name="Carninci P."/>
            <person name="Kasukawa T."/>
            <person name="Katayama S."/>
            <person name="Gough J."/>
            <person name="Frith M.C."/>
            <person name="Maeda N."/>
            <person name="Oyama R."/>
            <person name="Ravasi T."/>
            <person name="Lenhard B."/>
            <person name="Wells C."/>
            <person name="Kodzius R."/>
            <person name="Shimokawa K."/>
            <person name="Bajic V.B."/>
            <person name="Brenner S.E."/>
            <person name="Batalov S."/>
            <person name="Forrest A.R."/>
            <person name="Zavolan M."/>
            <person name="Davis M.J."/>
            <person name="Wilming L.G."/>
            <person name="Aidinis V."/>
            <person name="Allen J.E."/>
            <person name="Ambesi-Impiombato A."/>
            <person name="Apweiler R."/>
            <person name="Aturaliya R.N."/>
            <person name="Bailey T.L."/>
            <person name="Bansal M."/>
            <person name="Baxter L."/>
            <person name="Beisel K.W."/>
            <person name="Bersano T."/>
            <person name="Bono H."/>
            <person name="Chalk A.M."/>
            <person name="Chiu K.P."/>
            <person name="Choudhary V."/>
            <person name="Christoffels A."/>
            <person name="Clutterbuck D.R."/>
            <person name="Crowe M.L."/>
            <person name="Dalla E."/>
            <person name="Dalrymple B.P."/>
            <person name="de Bono B."/>
            <person name="Della Gatta G."/>
            <person name="di Bernardo D."/>
            <person name="Down T."/>
            <person name="Engstrom P."/>
            <person name="Fagiolini M."/>
            <person name="Faulkner G."/>
            <person name="Fletcher C.F."/>
            <person name="Fukushima T."/>
            <person name="Furuno M."/>
            <person name="Futaki S."/>
            <person name="Gariboldi M."/>
            <person name="Georgii-Hemming P."/>
            <person name="Gingeras T.R."/>
            <person name="Gojobori T."/>
            <person name="Green R.E."/>
            <person name="Gustincich S."/>
            <person name="Harbers M."/>
            <person name="Hayashi Y."/>
            <person name="Hensch T.K."/>
            <person name="Hirokawa N."/>
            <person name="Hill D."/>
            <person name="Huminiecki L."/>
            <person name="Iacono M."/>
            <person name="Ikeo K."/>
            <person name="Iwama A."/>
            <person name="Ishikawa T."/>
            <person name="Jakt M."/>
            <person name="Kanapin A."/>
            <person name="Katoh M."/>
            <person name="Kawasawa Y."/>
            <person name="Kelso J."/>
            <person name="Kitamura H."/>
            <person name="Kitano H."/>
            <person name="Kollias G."/>
            <person name="Krishnan S.P."/>
            <person name="Kruger A."/>
            <person name="Kummerfeld S.K."/>
            <person name="Kurochkin I.V."/>
            <person name="Lareau L.F."/>
            <person name="Lazarevic D."/>
            <person name="Lipovich L."/>
            <person name="Liu J."/>
            <person name="Liuni S."/>
            <person name="McWilliam S."/>
            <person name="Madan Babu M."/>
            <person name="Madera M."/>
            <person name="Marchionni L."/>
            <person name="Matsuda H."/>
            <person name="Matsuzawa S."/>
            <person name="Miki H."/>
            <person name="Mignone F."/>
            <person name="Miyake S."/>
            <person name="Morris K."/>
            <person name="Mottagui-Tabar S."/>
            <person name="Mulder N."/>
            <person name="Nakano N."/>
            <person name="Nakauchi H."/>
            <person name="Ng P."/>
            <person name="Nilsson R."/>
            <person name="Nishiguchi S."/>
            <person name="Nishikawa S."/>
            <person name="Nori F."/>
            <person name="Ohara O."/>
            <person name="Okazaki Y."/>
            <person name="Orlando V."/>
            <person name="Pang K.C."/>
            <person name="Pavan W.J."/>
            <person name="Pavesi G."/>
            <person name="Pesole G."/>
            <person name="Petrovsky N."/>
            <person name="Piazza S."/>
            <person name="Reed J."/>
            <person name="Reid J.F."/>
            <person name="Ring B.Z."/>
            <person name="Ringwald M."/>
            <person name="Rost B."/>
            <person name="Ruan Y."/>
            <person name="Salzberg S.L."/>
            <person name="Sandelin A."/>
            <person name="Schneider C."/>
            <person name="Schoenbach C."/>
            <person name="Sekiguchi K."/>
            <person name="Semple C.A."/>
            <person name="Seno S."/>
            <person name="Sessa L."/>
            <person name="Sheng Y."/>
            <person name="Shibata Y."/>
            <person name="Shimada H."/>
            <person name="Shimada K."/>
            <person name="Silva D."/>
            <person name="Sinclair B."/>
            <person name="Sperling S."/>
            <person name="Stupka E."/>
            <person name="Sugiura K."/>
            <person name="Sultana R."/>
            <person name="Takenaka Y."/>
            <person name="Taki K."/>
            <person name="Tammoja K."/>
            <person name="Tan S.L."/>
            <person name="Tang S."/>
            <person name="Taylor M.S."/>
            <person name="Tegner J."/>
            <person name="Teichmann S.A."/>
            <person name="Ueda H.R."/>
            <person name="van Nimwegen E."/>
            <person name="Verardo R."/>
            <person name="Wei C.L."/>
            <person name="Yagi K."/>
            <person name="Yamanishi H."/>
            <person name="Zabarovsky E."/>
            <person name="Zhu S."/>
            <person name="Zimmer A."/>
            <person name="Hide W."/>
            <person name="Bult C."/>
            <person name="Grimmond S.M."/>
            <person name="Teasdale R.D."/>
            <person name="Liu E.T."/>
            <person name="Brusic V."/>
            <person name="Quackenbush J."/>
            <person name="Wahlestedt C."/>
            <person name="Mattick J.S."/>
            <person name="Hume D.A."/>
            <person name="Kai C."/>
            <person name="Sasaki D."/>
            <person name="Tomaru Y."/>
            <person name="Fukuda S."/>
            <person name="Kanamori-Katayama M."/>
            <person name="Suzuki M."/>
            <person name="Aoki J."/>
            <person name="Arakawa T."/>
            <person name="Iida J."/>
            <person name="Imamura K."/>
            <person name="Itoh M."/>
            <person name="Kato T."/>
            <person name="Kawaji H."/>
            <person name="Kawagashira N."/>
            <person name="Kawashima T."/>
            <person name="Kojima M."/>
            <person name="Kondo S."/>
            <person name="Konno H."/>
            <person name="Nakano K."/>
            <person name="Ninomiya N."/>
            <person name="Nishio T."/>
            <person name="Okada M."/>
            <person name="Plessy C."/>
            <person name="Shibata K."/>
            <person name="Shiraki T."/>
            <person name="Suzuki S."/>
            <person name="Tagami M."/>
            <person name="Waki K."/>
            <person name="Watahiki A."/>
            <person name="Okamura-Oho Y."/>
            <person name="Suzuki H."/>
            <person name="Kawai J."/>
            <person name="Hayashizaki Y."/>
        </authorList>
    </citation>
    <scope>NUCLEOTIDE SEQUENCE [LARGE SCALE MRNA]</scope>
    <source>
        <strain>NOD</strain>
        <tissue>Dendritic cell</tissue>
    </source>
</reference>
<reference key="2">
    <citation type="journal article" date="2010" name="Comp. Biochem. Physiol.">
        <title>Comparative studies of mammalian acid lipases: Evidence for a new gene family in mouse and rat (Lipo).</title>
        <authorList>
            <person name="Holmes R.S."/>
            <person name="Cox L.A."/>
            <person name="VandeBerg J.L."/>
        </authorList>
    </citation>
    <scope>FUNCTION</scope>
    <scope>CATALYTIC ACTIVITY</scope>
    <scope>TISSUE SPECIFICITY</scope>
</reference>
<proteinExistence type="evidence at protein level"/>
<name>LIPN_MOUSE</name>
<keyword id="KW-1015">Disulfide bond</keyword>
<keyword id="KW-0325">Glycoprotein</keyword>
<keyword id="KW-0378">Hydrolase</keyword>
<keyword id="KW-0442">Lipid degradation</keyword>
<keyword id="KW-0443">Lipid metabolism</keyword>
<keyword id="KW-1185">Reference proteome</keyword>
<keyword id="KW-0964">Secreted</keyword>
<keyword id="KW-0732">Signal</keyword>
<dbReference type="EC" id="3.1.1.13" evidence="7"/>
<dbReference type="EC" id="3.1.1.3" evidence="7"/>
<dbReference type="EMBL" id="AK154333">
    <property type="protein sequence ID" value="BAE32519.1"/>
    <property type="molecule type" value="mRNA"/>
</dbReference>
<dbReference type="CCDS" id="CCDS37962.1"/>
<dbReference type="RefSeq" id="NP_081616.1">
    <property type="nucleotide sequence ID" value="NM_027340.2"/>
</dbReference>
<dbReference type="RefSeq" id="XP_006527396.1">
    <property type="nucleotide sequence ID" value="XM_006527333.2"/>
</dbReference>
<dbReference type="SMR" id="Q3U4B4"/>
<dbReference type="BioGRID" id="213899">
    <property type="interactions" value="1"/>
</dbReference>
<dbReference type="FunCoup" id="Q3U4B4">
    <property type="interactions" value="12"/>
</dbReference>
<dbReference type="STRING" id="10090.ENSMUSP00000025682"/>
<dbReference type="ESTHER" id="mouse-LIPN">
    <property type="family name" value="Acidic_Lipase"/>
</dbReference>
<dbReference type="GlyCosmos" id="Q3U4B4">
    <property type="glycosylation" value="1 site, No reported glycans"/>
</dbReference>
<dbReference type="GlyGen" id="Q3U4B4">
    <property type="glycosylation" value="1 site"/>
</dbReference>
<dbReference type="PaxDb" id="10090-ENSMUSP00000025682"/>
<dbReference type="ProteomicsDB" id="290036"/>
<dbReference type="Antibodypedia" id="48305">
    <property type="antibodies" value="66 antibodies from 11 providers"/>
</dbReference>
<dbReference type="Ensembl" id="ENSMUST00000025682.12">
    <property type="protein sequence ID" value="ENSMUSP00000025682.6"/>
    <property type="gene ID" value="ENSMUSG00000024770.15"/>
</dbReference>
<dbReference type="GeneID" id="70166"/>
<dbReference type="KEGG" id="mmu:70166"/>
<dbReference type="UCSC" id="uc008hfz.1">
    <property type="organism name" value="mouse"/>
</dbReference>
<dbReference type="AGR" id="MGI:1917416"/>
<dbReference type="CTD" id="643418"/>
<dbReference type="MGI" id="MGI:1917416">
    <property type="gene designation" value="Lipn"/>
</dbReference>
<dbReference type="VEuPathDB" id="HostDB:ENSMUSG00000024770"/>
<dbReference type="eggNOG" id="KOG2624">
    <property type="taxonomic scope" value="Eukaryota"/>
</dbReference>
<dbReference type="GeneTree" id="ENSGT00940000161695"/>
<dbReference type="HOGENOM" id="CLU_010974_0_0_1"/>
<dbReference type="InParanoid" id="Q3U4B4"/>
<dbReference type="OMA" id="YACEEHT"/>
<dbReference type="OrthoDB" id="9974421at2759"/>
<dbReference type="PhylomeDB" id="Q3U4B4"/>
<dbReference type="TreeFam" id="TF315485"/>
<dbReference type="Reactome" id="R-MMU-6809371">
    <property type="pathway name" value="Formation of the cornified envelope"/>
</dbReference>
<dbReference type="BioGRID-ORCS" id="70166">
    <property type="hits" value="1 hit in 77 CRISPR screens"/>
</dbReference>
<dbReference type="ChiTaRS" id="Lipn">
    <property type="organism name" value="mouse"/>
</dbReference>
<dbReference type="PRO" id="PR:Q3U4B4"/>
<dbReference type="Proteomes" id="UP000000589">
    <property type="component" value="Chromosome 19"/>
</dbReference>
<dbReference type="RNAct" id="Q3U4B4">
    <property type="molecule type" value="protein"/>
</dbReference>
<dbReference type="Bgee" id="ENSMUSG00000024770">
    <property type="expression patterns" value="Expressed in lumbar subsegment of spinal cord and 14 other cell types or tissues"/>
</dbReference>
<dbReference type="ExpressionAtlas" id="Q3U4B4">
    <property type="expression patterns" value="baseline and differential"/>
</dbReference>
<dbReference type="GO" id="GO:0005576">
    <property type="term" value="C:extracellular region"/>
    <property type="evidence" value="ECO:0007669"/>
    <property type="project" value="UniProtKB-SubCell"/>
</dbReference>
<dbReference type="GO" id="GO:0004771">
    <property type="term" value="F:sterol ester esterase activity"/>
    <property type="evidence" value="ECO:0007669"/>
    <property type="project" value="RHEA"/>
</dbReference>
<dbReference type="GO" id="GO:0004806">
    <property type="term" value="F:triacylglycerol lipase activity"/>
    <property type="evidence" value="ECO:0007669"/>
    <property type="project" value="RHEA"/>
</dbReference>
<dbReference type="GO" id="GO:0016042">
    <property type="term" value="P:lipid catabolic process"/>
    <property type="evidence" value="ECO:0007669"/>
    <property type="project" value="UniProtKB-KW"/>
</dbReference>
<dbReference type="FunFam" id="3.40.50.1820:FF:000012">
    <property type="entry name" value="Lipase"/>
    <property type="match status" value="1"/>
</dbReference>
<dbReference type="Gene3D" id="3.40.50.1820">
    <property type="entry name" value="alpha/beta hydrolase"/>
    <property type="match status" value="1"/>
</dbReference>
<dbReference type="InterPro" id="IPR000073">
    <property type="entry name" value="AB_hydrolase_1"/>
</dbReference>
<dbReference type="InterPro" id="IPR029058">
    <property type="entry name" value="AB_hydrolase_fold"/>
</dbReference>
<dbReference type="InterPro" id="IPR025483">
    <property type="entry name" value="Lipase_euk"/>
</dbReference>
<dbReference type="PANTHER" id="PTHR11005">
    <property type="entry name" value="LYSOSOMAL ACID LIPASE-RELATED"/>
    <property type="match status" value="1"/>
</dbReference>
<dbReference type="Pfam" id="PF00561">
    <property type="entry name" value="Abhydrolase_1"/>
    <property type="match status" value="1"/>
</dbReference>
<dbReference type="PIRSF" id="PIRSF000862">
    <property type="entry name" value="Steryl_ester_lip"/>
    <property type="match status" value="1"/>
</dbReference>
<dbReference type="SUPFAM" id="SSF53474">
    <property type="entry name" value="alpha/beta-Hydrolases"/>
    <property type="match status" value="1"/>
</dbReference>
<dbReference type="PROSITE" id="PS00120">
    <property type="entry name" value="LIPASE_SER"/>
    <property type="match status" value="1"/>
</dbReference>
<accession>Q3U4B4</accession>
<feature type="signal peptide" evidence="3">
    <location>
        <begin position="1"/>
        <end position="19"/>
    </location>
</feature>
<feature type="chain" id="PRO_0000286832" description="Lipase member N">
    <location>
        <begin position="20"/>
        <end position="400"/>
    </location>
</feature>
<feature type="domain" description="AB hydrolase-1" evidence="3">
    <location>
        <begin position="81"/>
        <end position="381"/>
    </location>
</feature>
<feature type="active site" description="Nucleophile" evidence="1">
    <location>
        <position position="175"/>
    </location>
</feature>
<feature type="active site" description="Charge relay system" evidence="4">
    <location>
        <position position="346"/>
    </location>
</feature>
<feature type="active site" description="Charge relay system" evidence="4">
    <location>
        <position position="375"/>
    </location>
</feature>
<feature type="glycosylation site" description="N-linked (GlcNAc...) asparagine" evidence="3">
    <location>
        <position position="274"/>
    </location>
</feature>
<feature type="disulfide bond" evidence="1">
    <location>
        <begin position="249"/>
        <end position="258"/>
    </location>
</feature>
<gene>
    <name type="primary">Lipn</name>
    <name type="synonym">Lipl4</name>
</gene>
<comment type="function">
    <text evidence="2 5">Plays a highly specific role in the last step of keratinocyte differentiation. Contains two distinct domains: the alpha/beta hydrolase fold and the abhydrolase-associated lipase region, also features the consensus sequence of the active site of a genuine lipase. May have an essential function in lipid metabolism of the most differentiated epidermal layers.</text>
</comment>
<comment type="catalytic activity">
    <reaction evidence="7">
        <text>a sterol ester + H2O = a sterol + a fatty acid + H(+)</text>
        <dbReference type="Rhea" id="RHEA:10100"/>
        <dbReference type="ChEBI" id="CHEBI:15377"/>
        <dbReference type="ChEBI" id="CHEBI:15378"/>
        <dbReference type="ChEBI" id="CHEBI:15889"/>
        <dbReference type="ChEBI" id="CHEBI:28868"/>
        <dbReference type="ChEBI" id="CHEBI:35915"/>
        <dbReference type="EC" id="3.1.1.13"/>
    </reaction>
    <physiologicalReaction direction="left-to-right" evidence="7">
        <dbReference type="Rhea" id="RHEA:10101"/>
    </physiologicalReaction>
</comment>
<comment type="catalytic activity">
    <reaction evidence="7">
        <text>a triacylglycerol + H2O = a 1,2-diacylglycerol + a fatty acid + H(+)</text>
        <dbReference type="Rhea" id="RHEA:35667"/>
        <dbReference type="ChEBI" id="CHEBI:15377"/>
        <dbReference type="ChEBI" id="CHEBI:15378"/>
        <dbReference type="ChEBI" id="CHEBI:17855"/>
        <dbReference type="ChEBI" id="CHEBI:28868"/>
        <dbReference type="ChEBI" id="CHEBI:49172"/>
    </reaction>
    <physiologicalReaction direction="left-to-right" evidence="7">
        <dbReference type="Rhea" id="RHEA:35668"/>
    </physiologicalReaction>
</comment>
<comment type="catalytic activity">
    <reaction evidence="7">
        <text>a triacylglycerol + H2O = a diacylglycerol + a fatty acid + H(+)</text>
        <dbReference type="Rhea" id="RHEA:12044"/>
        <dbReference type="ChEBI" id="CHEBI:15377"/>
        <dbReference type="ChEBI" id="CHEBI:15378"/>
        <dbReference type="ChEBI" id="CHEBI:17855"/>
        <dbReference type="ChEBI" id="CHEBI:18035"/>
        <dbReference type="ChEBI" id="CHEBI:28868"/>
        <dbReference type="EC" id="3.1.1.3"/>
    </reaction>
    <physiologicalReaction direction="left-to-right" evidence="7">
        <dbReference type="Rhea" id="RHEA:12045"/>
    </physiologicalReaction>
</comment>
<comment type="catalytic activity">
    <reaction evidence="7">
        <text>a cholesterol ester + H2O = cholesterol + a fatty acid + H(+)</text>
        <dbReference type="Rhea" id="RHEA:36403"/>
        <dbReference type="ChEBI" id="CHEBI:15377"/>
        <dbReference type="ChEBI" id="CHEBI:15378"/>
        <dbReference type="ChEBI" id="CHEBI:16113"/>
        <dbReference type="ChEBI" id="CHEBI:17002"/>
        <dbReference type="ChEBI" id="CHEBI:28868"/>
        <dbReference type="EC" id="3.1.1.13"/>
    </reaction>
    <physiologicalReaction direction="left-to-right" evidence="7">
        <dbReference type="Rhea" id="RHEA:36404"/>
    </physiologicalReaction>
</comment>
<comment type="subcellular location">
    <subcellularLocation>
        <location evidence="6">Secreted</location>
    </subcellularLocation>
</comment>
<comment type="tissue specificity">
    <text evidence="5">Highly expressed in the epidermis. Also detected in other tissues, although at much lower levels, including liver and kidney.</text>
</comment>
<comment type="similarity">
    <text evidence="6">Belongs to the AB hydrolase superfamily. Lipase family.</text>
</comment>
<protein>
    <recommendedName>
        <fullName>Lipase member N</fullName>
        <ecNumber evidence="7">3.1.1.13</ecNumber>
        <ecNumber evidence="7">3.1.1.3</ecNumber>
    </recommendedName>
    <alternativeName>
        <fullName>Lipase-like abhydrolase domain-containing protein 4</fullName>
    </alternativeName>
</protein>
<organism>
    <name type="scientific">Mus musculus</name>
    <name type="common">Mouse</name>
    <dbReference type="NCBI Taxonomy" id="10090"/>
    <lineage>
        <taxon>Eukaryota</taxon>
        <taxon>Metazoa</taxon>
        <taxon>Chordata</taxon>
        <taxon>Craniata</taxon>
        <taxon>Vertebrata</taxon>
        <taxon>Euteleostomi</taxon>
        <taxon>Mammalia</taxon>
        <taxon>Eutheria</taxon>
        <taxon>Euarchontoglires</taxon>
        <taxon>Glires</taxon>
        <taxon>Rodentia</taxon>
        <taxon>Myomorpha</taxon>
        <taxon>Muroidea</taxon>
        <taxon>Muridae</taxon>
        <taxon>Murinae</taxon>
        <taxon>Mus</taxon>
        <taxon>Mus</taxon>
    </lineage>
</organism>
<sequence length="400" mass="45744">MPMMWLFLTTACLIPGTLSAGGFLDFENKVNPEVWMNASEIIMYNGYPSEEYDVTTADGYILAINRIPHGRAQTGQTGPRPVVYMQHALFADNAYWLENFANGSLGFILADAGYDVWMGNSRGNTWSRRHKTLSANEEKFWAFSFNEMAKYDLPGIIDFIVNKTGQEKLYFIGHSLGTTIGFVAFSTMPELAQRIKMNFALGPVISFKYPTSVFTNLFLLPKSIIKLVFGTKGVLLEDKNARMSFITFCNQKLLQPLCSEFMSLWAGFNKKNMNMSRLDVYMAHAPTGSSIQNMLHIKQLYRSDEFRAYDWGSEAENMNHYNQSYPPLYDLTAMKVPTAIWAGGHDVLVTPQDVARILPQITNLRYFKQFPDWNHFDFVWGLDAPQRLYSKIISLMKEYF</sequence>